<proteinExistence type="inferred from homology"/>
<reference key="1">
    <citation type="submission" date="2007-05" db="EMBL/GenBank/DDBJ databases">
        <title>Complete sequence of chromosome of Staphylococcus aureus subsp. aureus JH9.</title>
        <authorList>
            <consortium name="US DOE Joint Genome Institute"/>
            <person name="Copeland A."/>
            <person name="Lucas S."/>
            <person name="Lapidus A."/>
            <person name="Barry K."/>
            <person name="Detter J.C."/>
            <person name="Glavina del Rio T."/>
            <person name="Hammon N."/>
            <person name="Israni S."/>
            <person name="Pitluck S."/>
            <person name="Chain P."/>
            <person name="Malfatti S."/>
            <person name="Shin M."/>
            <person name="Vergez L."/>
            <person name="Schmutz J."/>
            <person name="Larimer F."/>
            <person name="Land M."/>
            <person name="Hauser L."/>
            <person name="Kyrpides N."/>
            <person name="Kim E."/>
            <person name="Tomasz A."/>
            <person name="Richardson P."/>
        </authorList>
    </citation>
    <scope>NUCLEOTIDE SEQUENCE [LARGE SCALE GENOMIC DNA]</scope>
    <source>
        <strain>JH9</strain>
    </source>
</reference>
<gene>
    <name evidence="1" type="primary">tmcAL</name>
    <name type="ordered locus">SaurJH9_1185</name>
</gene>
<keyword id="KW-0067">ATP-binding</keyword>
<keyword id="KW-0963">Cytoplasm</keyword>
<keyword id="KW-0436">Ligase</keyword>
<keyword id="KW-0547">Nucleotide-binding</keyword>
<keyword id="KW-0694">RNA-binding</keyword>
<keyword id="KW-0819">tRNA processing</keyword>
<keyword id="KW-0820">tRNA-binding</keyword>
<evidence type="ECO:0000255" key="1">
    <source>
        <dbReference type="HAMAP-Rule" id="MF_01539"/>
    </source>
</evidence>
<protein>
    <recommendedName>
        <fullName evidence="1">tRNA(Met) cytidine acetate ligase</fullName>
        <ecNumber evidence="1">6.3.4.-</ecNumber>
    </recommendedName>
</protein>
<name>TMCAL_STAA9</name>
<organism>
    <name type="scientific">Staphylococcus aureus (strain JH9)</name>
    <dbReference type="NCBI Taxonomy" id="359786"/>
    <lineage>
        <taxon>Bacteria</taxon>
        <taxon>Bacillati</taxon>
        <taxon>Bacillota</taxon>
        <taxon>Bacilli</taxon>
        <taxon>Bacillales</taxon>
        <taxon>Staphylococcaceae</taxon>
        <taxon>Staphylococcus</taxon>
    </lineage>
</organism>
<accession>A5IS12</accession>
<sequence>MKSVGLITEYNPFHNGHQYHINQSKKLTNADVTIAIMSGNFVMRGEPAIYNKFTRAKMALSTADLVIELPATASLSSGDHFAELAVKVADYMSVDTIAFGSENNDIKTLKQLAHSINEIEQSESFSQKVKEGKSYPRIISELLEHHEALASPNNILGISYLKAIAKNAKNINAISIKRENAQHHDSLIQHHQFASGTSIRTSIISQDDHWHHVVPKDIQHLYVTPHITLNQIFPYLKYQIIAMTTDSLKNIYTVTEGFENRLKSNIYEATDFHHFVKLLKTKRYTYTHIQRLLMNVLLNIKPTDVTSNIHAVKVLAMNDRGRQYLKHLKTAFPERQYITNINKSNAHYFTNEIKATHIYNAISGQQQTDFNTPVIQQYR</sequence>
<dbReference type="EC" id="6.3.4.-" evidence="1"/>
<dbReference type="EMBL" id="CP000703">
    <property type="protein sequence ID" value="ABQ48985.1"/>
    <property type="molecule type" value="Genomic_DNA"/>
</dbReference>
<dbReference type="RefSeq" id="WP_000843611.1">
    <property type="nucleotide sequence ID" value="NC_009487.1"/>
</dbReference>
<dbReference type="SMR" id="A5IS12"/>
<dbReference type="KEGG" id="saj:SaurJH9_1185"/>
<dbReference type="HOGENOM" id="CLU_038915_0_2_9"/>
<dbReference type="GO" id="GO:0005737">
    <property type="term" value="C:cytoplasm"/>
    <property type="evidence" value="ECO:0007669"/>
    <property type="project" value="UniProtKB-SubCell"/>
</dbReference>
<dbReference type="GO" id="GO:0005524">
    <property type="term" value="F:ATP binding"/>
    <property type="evidence" value="ECO:0007669"/>
    <property type="project" value="UniProtKB-KW"/>
</dbReference>
<dbReference type="GO" id="GO:0016879">
    <property type="term" value="F:ligase activity, forming carbon-nitrogen bonds"/>
    <property type="evidence" value="ECO:0007669"/>
    <property type="project" value="UniProtKB-UniRule"/>
</dbReference>
<dbReference type="GO" id="GO:0000049">
    <property type="term" value="F:tRNA binding"/>
    <property type="evidence" value="ECO:0007669"/>
    <property type="project" value="UniProtKB-KW"/>
</dbReference>
<dbReference type="GO" id="GO:0006400">
    <property type="term" value="P:tRNA modification"/>
    <property type="evidence" value="ECO:0007669"/>
    <property type="project" value="UniProtKB-UniRule"/>
</dbReference>
<dbReference type="Gene3D" id="3.40.50.620">
    <property type="entry name" value="HUPs"/>
    <property type="match status" value="1"/>
</dbReference>
<dbReference type="HAMAP" id="MF_01539">
    <property type="entry name" value="TmcAL"/>
    <property type="match status" value="1"/>
</dbReference>
<dbReference type="InterPro" id="IPR014729">
    <property type="entry name" value="Rossmann-like_a/b/a_fold"/>
</dbReference>
<dbReference type="InterPro" id="IPR008513">
    <property type="entry name" value="tRNA(Met)_cyd_acetate_ligase"/>
</dbReference>
<dbReference type="NCBIfam" id="NF010191">
    <property type="entry name" value="PRK13670.1"/>
    <property type="match status" value="1"/>
</dbReference>
<dbReference type="PANTHER" id="PTHR37825">
    <property type="entry name" value="TRNA(MET) CYTIDINE ACETATE LIGASE"/>
    <property type="match status" value="1"/>
</dbReference>
<dbReference type="PANTHER" id="PTHR37825:SF1">
    <property type="entry name" value="TRNA(MET) CYTIDINE ACETATE LIGASE"/>
    <property type="match status" value="1"/>
</dbReference>
<dbReference type="Pfam" id="PF05636">
    <property type="entry name" value="HIGH_NTase1"/>
    <property type="match status" value="1"/>
</dbReference>
<dbReference type="SUPFAM" id="SSF52374">
    <property type="entry name" value="Nucleotidylyl transferase"/>
    <property type="match status" value="1"/>
</dbReference>
<feature type="chain" id="PRO_1000087623" description="tRNA(Met) cytidine acetate ligase">
    <location>
        <begin position="1"/>
        <end position="379"/>
    </location>
</feature>
<feature type="binding site" evidence="1">
    <location>
        <begin position="7"/>
        <end position="20"/>
    </location>
    <ligand>
        <name>ATP</name>
        <dbReference type="ChEBI" id="CHEBI:30616"/>
    </ligand>
</feature>
<feature type="binding site" evidence="1">
    <location>
        <position position="100"/>
    </location>
    <ligand>
        <name>ATP</name>
        <dbReference type="ChEBI" id="CHEBI:30616"/>
    </ligand>
</feature>
<feature type="binding site" evidence="1">
    <location>
        <position position="153"/>
    </location>
    <ligand>
        <name>ATP</name>
        <dbReference type="ChEBI" id="CHEBI:30616"/>
    </ligand>
</feature>
<feature type="binding site" evidence="1">
    <location>
        <position position="178"/>
    </location>
    <ligand>
        <name>ATP</name>
        <dbReference type="ChEBI" id="CHEBI:30616"/>
    </ligand>
</feature>
<comment type="function">
    <text evidence="1">Catalyzes the formation of N(4)-acetylcytidine (ac(4)C) at the wobble position of elongator tRNA(Met), using acetate and ATP as substrates. First activates an acetate ion to form acetyladenylate (Ac-AMP) and then transfers the acetyl group to tRNA to form ac(4)C34.</text>
</comment>
<comment type="catalytic activity">
    <reaction evidence="1">
        <text>cytidine(34) in elongator tRNA(Met) + acetate + ATP = N(4)-acetylcytidine(34) in elongator tRNA(Met) + AMP + diphosphate</text>
        <dbReference type="Rhea" id="RHEA:58144"/>
        <dbReference type="Rhea" id="RHEA-COMP:10693"/>
        <dbReference type="Rhea" id="RHEA-COMP:10694"/>
        <dbReference type="ChEBI" id="CHEBI:30089"/>
        <dbReference type="ChEBI" id="CHEBI:30616"/>
        <dbReference type="ChEBI" id="CHEBI:33019"/>
        <dbReference type="ChEBI" id="CHEBI:74900"/>
        <dbReference type="ChEBI" id="CHEBI:82748"/>
        <dbReference type="ChEBI" id="CHEBI:456215"/>
    </reaction>
</comment>
<comment type="subcellular location">
    <subcellularLocation>
        <location evidence="1">Cytoplasm</location>
    </subcellularLocation>
</comment>
<comment type="similarity">
    <text evidence="1">Belongs to the TmcAL family.</text>
</comment>